<feature type="chain" id="PRO_0000405765" description="Nuclear egress protein 1">
    <location>
        <begin position="1"/>
        <end position="280"/>
    </location>
</feature>
<feature type="zinc finger region" description="CCCH-type" evidence="1">
    <location>
        <begin position="86"/>
        <end position="203"/>
    </location>
</feature>
<keyword id="KW-1043">Host membrane</keyword>
<keyword id="KW-1048">Host nucleus</keyword>
<keyword id="KW-0472">Membrane</keyword>
<keyword id="KW-0479">Metal-binding</keyword>
<keyword id="KW-0597">Phosphoprotein</keyword>
<keyword id="KW-1185">Reference proteome</keyword>
<keyword id="KW-0862">Zinc</keyword>
<keyword id="KW-0863">Zinc-finger</keyword>
<protein>
    <recommendedName>
        <fullName evidence="1">Nuclear egress protein 1</fullName>
    </recommendedName>
</protein>
<organism>
    <name type="scientific">Alcelaphine herpesvirus 1 (strain C500)</name>
    <name type="common">AlHV-1</name>
    <name type="synonym">Malignant catarrhal fever virus</name>
    <dbReference type="NCBI Taxonomy" id="654901"/>
    <lineage>
        <taxon>Viruses</taxon>
        <taxon>Duplodnaviria</taxon>
        <taxon>Heunggongvirae</taxon>
        <taxon>Peploviricota</taxon>
        <taxon>Herviviricetes</taxon>
        <taxon>Herpesvirales</taxon>
        <taxon>Orthoherpesviridae</taxon>
        <taxon>Gammaherpesvirinae</taxon>
        <taxon>Macavirus</taxon>
        <taxon>Macavirus alcelaphinegamma1</taxon>
    </lineage>
</organism>
<proteinExistence type="inferred from homology"/>
<comment type="function">
    <text evidence="1">Plays an essential role in virion nuclear egress, the first step of virion release from infected cell. Within the host nucleus, NEC1 interacts with the newly formed capsid through the vertexes and directs it to the inner nuclear membrane by associating with NEC2. Induces the budding of the capsid at the inner nuclear membrane as well as its envelopment into the perinuclear space. There, the NEC1/NEC2 complex promotes the fusion of the enveloped capsid with the outer nuclear membrane and the subsequent release of the viral capsid into the cytoplasm where it will reach the secondary budding sites in the host Golgi or trans-Golgi network.</text>
</comment>
<comment type="subunit">
    <text evidence="1">Forms a heterohexameric complex with NEC2. Interacts with capsid vertex specific component 2/CVC2; this interaction directs the capsid to the host inner nuclear membrane to initiate budding.</text>
</comment>
<comment type="subcellular location">
    <subcellularLocation>
        <location evidence="1">Host nucleus inner membrane</location>
    </subcellularLocation>
    <text evidence="1">Remains attached to the nucleus inner membrane through interaction with NEC2.</text>
</comment>
<comment type="PTM">
    <text evidence="1">Phosphorylated at serine residues in the N-terminus. This phosphorylation regulates the localization within the inner nuclear membrane.</text>
</comment>
<comment type="similarity">
    <text evidence="1">Belongs to the herpesviridae NEC1 protein family.</text>
</comment>
<sequence>MHKIQKMSCTPSVRSRYTLKRKRLNSAKSATLKKKKVFLSNSEFFAGVSTNYELGKDFLREMDTPICTSNTVFLPVKFSDVAPGRCLTLSPYGHSSVLGFHCQECKPDSSSGFTQAQQSAESNELLSVNLCFLNNVEKVVQHKAFYLSLLGHSMNTVKQSLGQPSLLYCYTVLKKFYPQIFPIFTANGPMLTMYIIFTSLTLHVSEAVLRILTDNVENHNLSADCYKGHYILSIEPQALEESNLNVCVTKICDLVAQLDFSDELKQEYVNGSTLIANFLN</sequence>
<accession>O36420</accession>
<gene>
    <name evidence="1" type="primary">NEC1</name>
    <name type="ordered locus">69</name>
</gene>
<evidence type="ECO:0000255" key="1">
    <source>
        <dbReference type="HAMAP-Rule" id="MF_04023"/>
    </source>
</evidence>
<organismHost>
    <name type="scientific">Connochaetes taurinus</name>
    <name type="common">Blue wildebeest</name>
    <dbReference type="NCBI Taxonomy" id="9927"/>
</organismHost>
<dbReference type="EMBL" id="AF005370">
    <property type="protein sequence ID" value="AAC58117.1"/>
    <property type="molecule type" value="Genomic_DNA"/>
</dbReference>
<dbReference type="PIR" id="T03165">
    <property type="entry name" value="T03165"/>
</dbReference>
<dbReference type="RefSeq" id="NP_065569.1">
    <property type="nucleotide sequence ID" value="NC_002531.1"/>
</dbReference>
<dbReference type="SMR" id="O36420"/>
<dbReference type="KEGG" id="vg:911772"/>
<dbReference type="Proteomes" id="UP000000941">
    <property type="component" value="Segment"/>
</dbReference>
<dbReference type="GO" id="GO:0044201">
    <property type="term" value="C:host cell nuclear inner membrane"/>
    <property type="evidence" value="ECO:0007669"/>
    <property type="project" value="UniProtKB-SubCell"/>
</dbReference>
<dbReference type="GO" id="GO:0016020">
    <property type="term" value="C:membrane"/>
    <property type="evidence" value="ECO:0007669"/>
    <property type="project" value="UniProtKB-KW"/>
</dbReference>
<dbReference type="GO" id="GO:0008270">
    <property type="term" value="F:zinc ion binding"/>
    <property type="evidence" value="ECO:0007669"/>
    <property type="project" value="UniProtKB-KW"/>
</dbReference>
<dbReference type="GO" id="GO:0046765">
    <property type="term" value="P:viral budding from nuclear membrane"/>
    <property type="evidence" value="ECO:0007669"/>
    <property type="project" value="InterPro"/>
</dbReference>
<dbReference type="HAMAP" id="MF_04023">
    <property type="entry name" value="HSV_NEC1"/>
    <property type="match status" value="1"/>
</dbReference>
<dbReference type="InterPro" id="IPR021152">
    <property type="entry name" value="Herpes_UL31"/>
</dbReference>
<dbReference type="Pfam" id="PF02718">
    <property type="entry name" value="Herpes_UL31"/>
    <property type="match status" value="1"/>
</dbReference>
<reference key="1">
    <citation type="journal article" date="1997" name="J. Virol.">
        <title>Primary structure of the alcelaphine herpesvirus 1 genome.</title>
        <authorList>
            <person name="Ensser A."/>
            <person name="Pflanz R."/>
            <person name="Fleckenstein B."/>
        </authorList>
    </citation>
    <scope>NUCLEOTIDE SEQUENCE [LARGE SCALE GENOMIC DNA]</scope>
</reference>
<name>NEC1_ALHV1</name>